<comment type="function">
    <text evidence="1">Transaldolase is important for the balance of metabolites in the pentose-phosphate pathway.</text>
</comment>
<comment type="catalytic activity">
    <reaction evidence="1">
        <text>D-sedoheptulose 7-phosphate + D-glyceraldehyde 3-phosphate = D-erythrose 4-phosphate + beta-D-fructose 6-phosphate</text>
        <dbReference type="Rhea" id="RHEA:17053"/>
        <dbReference type="ChEBI" id="CHEBI:16897"/>
        <dbReference type="ChEBI" id="CHEBI:57483"/>
        <dbReference type="ChEBI" id="CHEBI:57634"/>
        <dbReference type="ChEBI" id="CHEBI:59776"/>
        <dbReference type="EC" id="2.2.1.2"/>
    </reaction>
</comment>
<comment type="pathway">
    <text evidence="1">Carbohydrate degradation; pentose phosphate pathway; D-glyceraldehyde 3-phosphate and beta-D-fructose 6-phosphate from D-ribose 5-phosphate and D-xylulose 5-phosphate (non-oxidative stage): step 2/3.</text>
</comment>
<comment type="subcellular location">
    <subcellularLocation>
        <location evidence="1">Cytoplasm</location>
    </subcellularLocation>
</comment>
<comment type="similarity">
    <text evidence="1">Belongs to the transaldolase family. Type 3B subfamily.</text>
</comment>
<sequence length="218" mass="24091">MKFFIDTADVNEIREANKLHFLDGVTTNPTLIAKVKKPFWDVVKSILAEVPDKPVSLEVASTDAEGMIKEGEKLAELGKNVVIKIPMTPEGLKAVSYFENKGIKTNVTLVFSPAQALLAMKVGASYISPFVGRLDDISHTGMDLIRQIKQIKDNYNFKSEIIVASVRNPVHVIESAMIGADIATIPYSVIAQLAKHPLTDIGLERFLKDWESVPEKPF</sequence>
<protein>
    <recommendedName>
        <fullName evidence="1">Probable transaldolase</fullName>
        <ecNumber evidence="1">2.2.1.2</ecNumber>
    </recommendedName>
</protein>
<proteinExistence type="inferred from homology"/>
<reference key="1">
    <citation type="journal article" date="2009" name="J. Bacteriol.">
        <title>Complete and draft genome sequences of six members of the Aquificales.</title>
        <authorList>
            <person name="Reysenbach A.-L."/>
            <person name="Hamamura N."/>
            <person name="Podar M."/>
            <person name="Griffiths E."/>
            <person name="Ferreira S."/>
            <person name="Hochstein R."/>
            <person name="Heidelberg J."/>
            <person name="Johnson J."/>
            <person name="Mead D."/>
            <person name="Pohorille A."/>
            <person name="Sarmiento M."/>
            <person name="Schweighofer K."/>
            <person name="Seshadri R."/>
            <person name="Voytek M.A."/>
        </authorList>
    </citation>
    <scope>NUCLEOTIDE SEQUENCE [LARGE SCALE GENOMIC DNA]</scope>
    <source>
        <strain>YO3AOP1</strain>
    </source>
</reference>
<organism>
    <name type="scientific">Sulfurihydrogenibium sp. (strain YO3AOP1)</name>
    <dbReference type="NCBI Taxonomy" id="436114"/>
    <lineage>
        <taxon>Bacteria</taxon>
        <taxon>Pseudomonadati</taxon>
        <taxon>Aquificota</taxon>
        <taxon>Aquificia</taxon>
        <taxon>Aquificales</taxon>
        <taxon>Hydrogenothermaceae</taxon>
        <taxon>Sulfurihydrogenibium</taxon>
    </lineage>
</organism>
<dbReference type="EC" id="2.2.1.2" evidence="1"/>
<dbReference type="EMBL" id="CP001080">
    <property type="protein sequence ID" value="ACD67372.1"/>
    <property type="molecule type" value="Genomic_DNA"/>
</dbReference>
<dbReference type="RefSeq" id="WP_012460427.1">
    <property type="nucleotide sequence ID" value="NC_010730.1"/>
</dbReference>
<dbReference type="SMR" id="B2V7E1"/>
<dbReference type="STRING" id="436114.SYO3AOP1_1777"/>
<dbReference type="KEGG" id="sul:SYO3AOP1_1777"/>
<dbReference type="eggNOG" id="COG0176">
    <property type="taxonomic scope" value="Bacteria"/>
</dbReference>
<dbReference type="HOGENOM" id="CLU_079764_0_0_0"/>
<dbReference type="UniPathway" id="UPA00115">
    <property type="reaction ID" value="UER00414"/>
</dbReference>
<dbReference type="GO" id="GO:0005737">
    <property type="term" value="C:cytoplasm"/>
    <property type="evidence" value="ECO:0007669"/>
    <property type="project" value="UniProtKB-SubCell"/>
</dbReference>
<dbReference type="GO" id="GO:0016832">
    <property type="term" value="F:aldehyde-lyase activity"/>
    <property type="evidence" value="ECO:0007669"/>
    <property type="project" value="InterPro"/>
</dbReference>
<dbReference type="GO" id="GO:0004801">
    <property type="term" value="F:transaldolase activity"/>
    <property type="evidence" value="ECO:0007669"/>
    <property type="project" value="UniProtKB-UniRule"/>
</dbReference>
<dbReference type="GO" id="GO:0005975">
    <property type="term" value="P:carbohydrate metabolic process"/>
    <property type="evidence" value="ECO:0007669"/>
    <property type="project" value="InterPro"/>
</dbReference>
<dbReference type="GO" id="GO:0006098">
    <property type="term" value="P:pentose-phosphate shunt"/>
    <property type="evidence" value="ECO:0007669"/>
    <property type="project" value="UniProtKB-UniRule"/>
</dbReference>
<dbReference type="CDD" id="cd00956">
    <property type="entry name" value="Transaldolase_FSA"/>
    <property type="match status" value="1"/>
</dbReference>
<dbReference type="FunFam" id="3.20.20.70:FF:000018">
    <property type="entry name" value="Probable transaldolase"/>
    <property type="match status" value="1"/>
</dbReference>
<dbReference type="Gene3D" id="3.20.20.70">
    <property type="entry name" value="Aldolase class I"/>
    <property type="match status" value="1"/>
</dbReference>
<dbReference type="HAMAP" id="MF_00494">
    <property type="entry name" value="Transaldolase_3b"/>
    <property type="match status" value="1"/>
</dbReference>
<dbReference type="InterPro" id="IPR013785">
    <property type="entry name" value="Aldolase_TIM"/>
</dbReference>
<dbReference type="InterPro" id="IPR001585">
    <property type="entry name" value="TAL/FSA"/>
</dbReference>
<dbReference type="InterPro" id="IPR022999">
    <property type="entry name" value="Transaldolase_3B"/>
</dbReference>
<dbReference type="InterPro" id="IPR004731">
    <property type="entry name" value="Transaldolase_3B/F6P_aldolase"/>
</dbReference>
<dbReference type="InterPro" id="IPR018225">
    <property type="entry name" value="Transaldolase_AS"/>
</dbReference>
<dbReference type="InterPro" id="IPR033919">
    <property type="entry name" value="TSA/FSA_arc/bac"/>
</dbReference>
<dbReference type="NCBIfam" id="TIGR00875">
    <property type="entry name" value="fsa_talC_mipB"/>
    <property type="match status" value="1"/>
</dbReference>
<dbReference type="PANTHER" id="PTHR10683:SF40">
    <property type="entry name" value="FRUCTOSE-6-PHOSPHATE ALDOLASE 1-RELATED"/>
    <property type="match status" value="1"/>
</dbReference>
<dbReference type="PANTHER" id="PTHR10683">
    <property type="entry name" value="TRANSALDOLASE"/>
    <property type="match status" value="1"/>
</dbReference>
<dbReference type="Pfam" id="PF00923">
    <property type="entry name" value="TAL_FSA"/>
    <property type="match status" value="1"/>
</dbReference>
<dbReference type="SUPFAM" id="SSF51569">
    <property type="entry name" value="Aldolase"/>
    <property type="match status" value="1"/>
</dbReference>
<dbReference type="PROSITE" id="PS01054">
    <property type="entry name" value="TRANSALDOLASE_1"/>
    <property type="match status" value="1"/>
</dbReference>
<dbReference type="PROSITE" id="PS00958">
    <property type="entry name" value="TRANSALDOLASE_2"/>
    <property type="match status" value="1"/>
</dbReference>
<evidence type="ECO:0000255" key="1">
    <source>
        <dbReference type="HAMAP-Rule" id="MF_00494"/>
    </source>
</evidence>
<keyword id="KW-0963">Cytoplasm</keyword>
<keyword id="KW-0570">Pentose shunt</keyword>
<keyword id="KW-0704">Schiff base</keyword>
<keyword id="KW-0808">Transferase</keyword>
<feature type="chain" id="PRO_1000126361" description="Probable transaldolase">
    <location>
        <begin position="1"/>
        <end position="218"/>
    </location>
</feature>
<feature type="active site" description="Schiff-base intermediate with substrate" evidence="1">
    <location>
        <position position="84"/>
    </location>
</feature>
<name>TAL_SULSY</name>
<accession>B2V7E1</accession>
<gene>
    <name evidence="1" type="primary">tal</name>
    <name type="ordered locus">SYO3AOP1_1777</name>
</gene>